<organism>
    <name type="scientific">Caulobacter vibrioides (strain NA1000 / CB15N)</name>
    <name type="common">Caulobacter crescentus</name>
    <dbReference type="NCBI Taxonomy" id="565050"/>
    <lineage>
        <taxon>Bacteria</taxon>
        <taxon>Pseudomonadati</taxon>
        <taxon>Pseudomonadota</taxon>
        <taxon>Alphaproteobacteria</taxon>
        <taxon>Caulobacterales</taxon>
        <taxon>Caulobacteraceae</taxon>
        <taxon>Caulobacter</taxon>
    </lineage>
</organism>
<keyword id="KW-0067">ATP-binding</keyword>
<keyword id="KW-0436">Ligase</keyword>
<keyword id="KW-0479">Metal-binding</keyword>
<keyword id="KW-0547">Nucleotide-binding</keyword>
<keyword id="KW-0671">Queuosine biosynthesis</keyword>
<keyword id="KW-1185">Reference proteome</keyword>
<keyword id="KW-0862">Zinc</keyword>
<comment type="function">
    <text evidence="1">Catalyzes the ATP-dependent conversion of 7-carboxy-7-deazaguanine (CDG) to 7-cyano-7-deazaguanine (preQ(0)).</text>
</comment>
<comment type="catalytic activity">
    <reaction evidence="1">
        <text>7-carboxy-7-deazaguanine + NH4(+) + ATP = 7-cyano-7-deazaguanine + ADP + phosphate + H2O + H(+)</text>
        <dbReference type="Rhea" id="RHEA:27982"/>
        <dbReference type="ChEBI" id="CHEBI:15377"/>
        <dbReference type="ChEBI" id="CHEBI:15378"/>
        <dbReference type="ChEBI" id="CHEBI:28938"/>
        <dbReference type="ChEBI" id="CHEBI:30616"/>
        <dbReference type="ChEBI" id="CHEBI:43474"/>
        <dbReference type="ChEBI" id="CHEBI:45075"/>
        <dbReference type="ChEBI" id="CHEBI:61036"/>
        <dbReference type="ChEBI" id="CHEBI:456216"/>
        <dbReference type="EC" id="6.3.4.20"/>
    </reaction>
</comment>
<comment type="cofactor">
    <cofactor evidence="1">
        <name>Zn(2+)</name>
        <dbReference type="ChEBI" id="CHEBI:29105"/>
    </cofactor>
    <text evidence="1">Binds 1 zinc ion per subunit.</text>
</comment>
<comment type="pathway">
    <text evidence="1">Purine metabolism; 7-cyano-7-deazaguanine biosynthesis.</text>
</comment>
<comment type="similarity">
    <text evidence="1">Belongs to the QueC family.</text>
</comment>
<dbReference type="EC" id="6.3.4.20" evidence="1"/>
<dbReference type="EMBL" id="CP001340">
    <property type="protein sequence ID" value="ACL96727.1"/>
    <property type="molecule type" value="Genomic_DNA"/>
</dbReference>
<dbReference type="RefSeq" id="WP_010920996.1">
    <property type="nucleotide sequence ID" value="NC_011916.1"/>
</dbReference>
<dbReference type="RefSeq" id="YP_002518635.1">
    <property type="nucleotide sequence ID" value="NC_011916.1"/>
</dbReference>
<dbReference type="SMR" id="B8H3X3"/>
<dbReference type="GeneID" id="7330856"/>
<dbReference type="KEGG" id="ccs:CCNA_03262"/>
<dbReference type="PATRIC" id="fig|565050.3.peg.3186"/>
<dbReference type="HOGENOM" id="CLU_081854_0_0_5"/>
<dbReference type="OrthoDB" id="9789567at2"/>
<dbReference type="PhylomeDB" id="B8H3X3"/>
<dbReference type="UniPathway" id="UPA00391"/>
<dbReference type="Proteomes" id="UP000001364">
    <property type="component" value="Chromosome"/>
</dbReference>
<dbReference type="GO" id="GO:0005524">
    <property type="term" value="F:ATP binding"/>
    <property type="evidence" value="ECO:0007669"/>
    <property type="project" value="UniProtKB-UniRule"/>
</dbReference>
<dbReference type="GO" id="GO:0016879">
    <property type="term" value="F:ligase activity, forming carbon-nitrogen bonds"/>
    <property type="evidence" value="ECO:0007669"/>
    <property type="project" value="UniProtKB-UniRule"/>
</dbReference>
<dbReference type="GO" id="GO:0008270">
    <property type="term" value="F:zinc ion binding"/>
    <property type="evidence" value="ECO:0007669"/>
    <property type="project" value="UniProtKB-UniRule"/>
</dbReference>
<dbReference type="GO" id="GO:0008616">
    <property type="term" value="P:queuosine biosynthetic process"/>
    <property type="evidence" value="ECO:0007669"/>
    <property type="project" value="UniProtKB-UniRule"/>
</dbReference>
<dbReference type="CDD" id="cd01995">
    <property type="entry name" value="QueC-like"/>
    <property type="match status" value="1"/>
</dbReference>
<dbReference type="Gene3D" id="3.40.50.620">
    <property type="entry name" value="HUPs"/>
    <property type="match status" value="1"/>
</dbReference>
<dbReference type="HAMAP" id="MF_01633">
    <property type="entry name" value="QueC"/>
    <property type="match status" value="1"/>
</dbReference>
<dbReference type="InterPro" id="IPR018317">
    <property type="entry name" value="QueC"/>
</dbReference>
<dbReference type="InterPro" id="IPR014729">
    <property type="entry name" value="Rossmann-like_a/b/a_fold"/>
</dbReference>
<dbReference type="NCBIfam" id="TIGR00364">
    <property type="entry name" value="7-cyano-7-deazaguanine synthase QueC"/>
    <property type="match status" value="1"/>
</dbReference>
<dbReference type="PANTHER" id="PTHR42914">
    <property type="entry name" value="7-CYANO-7-DEAZAGUANINE SYNTHASE"/>
    <property type="match status" value="1"/>
</dbReference>
<dbReference type="PANTHER" id="PTHR42914:SF1">
    <property type="entry name" value="7-CYANO-7-DEAZAGUANINE SYNTHASE"/>
    <property type="match status" value="1"/>
</dbReference>
<dbReference type="Pfam" id="PF06508">
    <property type="entry name" value="QueC"/>
    <property type="match status" value="1"/>
</dbReference>
<dbReference type="PIRSF" id="PIRSF006293">
    <property type="entry name" value="ExsB"/>
    <property type="match status" value="1"/>
</dbReference>
<dbReference type="SUPFAM" id="SSF52402">
    <property type="entry name" value="Adenine nucleotide alpha hydrolases-like"/>
    <property type="match status" value="1"/>
</dbReference>
<name>QUEC_CAUVN</name>
<sequence length="242" mass="26876">MSPRERQAALVLFSGGQDSSVCLAWALERYDRVETVGFDYGQRHAIEMQARQAVRREVAARFPQWAERLGEDHVLDIRSFGAVAQSALTADRAIEMTERGLPSTFVPGRNLVFLTYAAALADRRGIDALVGGMCETDFSGYPDCRRDTLDAMQAALNLGMDRNFRIETPLMWLTKAQTWGLSKQLGGEALVSLIVEESHTCYQGERGQLHAWGHGCGTCPACELREKGYVEWDMAGREALAQ</sequence>
<reference key="1">
    <citation type="journal article" date="2010" name="J. Bacteriol.">
        <title>The genetic basis of laboratory adaptation in Caulobacter crescentus.</title>
        <authorList>
            <person name="Marks M.E."/>
            <person name="Castro-Rojas C.M."/>
            <person name="Teiling C."/>
            <person name="Du L."/>
            <person name="Kapatral V."/>
            <person name="Walunas T.L."/>
            <person name="Crosson S."/>
        </authorList>
    </citation>
    <scope>NUCLEOTIDE SEQUENCE [LARGE SCALE GENOMIC DNA]</scope>
    <source>
        <strain>NA1000 / CB15N</strain>
    </source>
</reference>
<accession>B8H3X3</accession>
<feature type="chain" id="PRO_1000186570" description="7-cyano-7-deazaguanine synthase">
    <location>
        <begin position="1"/>
        <end position="242"/>
    </location>
</feature>
<feature type="binding site" evidence="1">
    <location>
        <begin position="13"/>
        <end position="23"/>
    </location>
    <ligand>
        <name>ATP</name>
        <dbReference type="ChEBI" id="CHEBI:30616"/>
    </ligand>
</feature>
<feature type="binding site" evidence="1">
    <location>
        <position position="201"/>
    </location>
    <ligand>
        <name>Zn(2+)</name>
        <dbReference type="ChEBI" id="CHEBI:29105"/>
    </ligand>
</feature>
<feature type="binding site" evidence="1">
    <location>
        <position position="216"/>
    </location>
    <ligand>
        <name>Zn(2+)</name>
        <dbReference type="ChEBI" id="CHEBI:29105"/>
    </ligand>
</feature>
<feature type="binding site" evidence="1">
    <location>
        <position position="219"/>
    </location>
    <ligand>
        <name>Zn(2+)</name>
        <dbReference type="ChEBI" id="CHEBI:29105"/>
    </ligand>
</feature>
<feature type="binding site" evidence="1">
    <location>
        <position position="222"/>
    </location>
    <ligand>
        <name>Zn(2+)</name>
        <dbReference type="ChEBI" id="CHEBI:29105"/>
    </ligand>
</feature>
<evidence type="ECO:0000255" key="1">
    <source>
        <dbReference type="HAMAP-Rule" id="MF_01633"/>
    </source>
</evidence>
<protein>
    <recommendedName>
        <fullName evidence="1">7-cyano-7-deazaguanine synthase</fullName>
        <ecNumber evidence="1">6.3.4.20</ecNumber>
    </recommendedName>
    <alternativeName>
        <fullName evidence="1">7-cyano-7-carbaguanine synthase</fullName>
    </alternativeName>
    <alternativeName>
        <fullName evidence="1">PreQ(0) synthase</fullName>
    </alternativeName>
    <alternativeName>
        <fullName evidence="1">Queuosine biosynthesis protein QueC</fullName>
    </alternativeName>
</protein>
<gene>
    <name evidence="1" type="primary">queC</name>
    <name type="ordered locus">CCNA_03262</name>
</gene>
<proteinExistence type="inferred from homology"/>